<proteinExistence type="inferred from homology"/>
<keyword id="KW-0067">ATP-binding</keyword>
<keyword id="KW-0436">Ligase</keyword>
<keyword id="KW-0547">Nucleotide-binding</keyword>
<dbReference type="EC" id="6.3.2.2" evidence="1"/>
<dbReference type="EMBL" id="CP000958">
    <property type="protein sequence ID" value="ACA89267.1"/>
    <property type="molecule type" value="Genomic_DNA"/>
</dbReference>
<dbReference type="RefSeq" id="WP_006490006.1">
    <property type="nucleotide sequence ID" value="NC_010508.1"/>
</dbReference>
<dbReference type="SMR" id="B1K1H9"/>
<dbReference type="KEGG" id="bcm:Bcenmc03_0087"/>
<dbReference type="HOGENOM" id="CLU_044848_1_1_4"/>
<dbReference type="Proteomes" id="UP000002169">
    <property type="component" value="Chromosome 1"/>
</dbReference>
<dbReference type="GO" id="GO:0005524">
    <property type="term" value="F:ATP binding"/>
    <property type="evidence" value="ECO:0007669"/>
    <property type="project" value="UniProtKB-KW"/>
</dbReference>
<dbReference type="GO" id="GO:0004357">
    <property type="term" value="F:glutamate-cysteine ligase activity"/>
    <property type="evidence" value="ECO:0007669"/>
    <property type="project" value="UniProtKB-EC"/>
</dbReference>
<dbReference type="GO" id="GO:0042398">
    <property type="term" value="P:modified amino acid biosynthetic process"/>
    <property type="evidence" value="ECO:0007669"/>
    <property type="project" value="InterPro"/>
</dbReference>
<dbReference type="Gene3D" id="3.30.590.20">
    <property type="match status" value="1"/>
</dbReference>
<dbReference type="HAMAP" id="MF_01609">
    <property type="entry name" value="Glu_cys_ligase_2"/>
    <property type="match status" value="1"/>
</dbReference>
<dbReference type="InterPro" id="IPR050141">
    <property type="entry name" value="GCL_type2/YbdK_subfam"/>
</dbReference>
<dbReference type="InterPro" id="IPR006336">
    <property type="entry name" value="GCS2"/>
</dbReference>
<dbReference type="InterPro" id="IPR014746">
    <property type="entry name" value="Gln_synth/guanido_kin_cat_dom"/>
</dbReference>
<dbReference type="InterPro" id="IPR011793">
    <property type="entry name" value="YbdK"/>
</dbReference>
<dbReference type="NCBIfam" id="TIGR02050">
    <property type="entry name" value="gshA_cyan_rel"/>
    <property type="match status" value="1"/>
</dbReference>
<dbReference type="NCBIfam" id="NF010040">
    <property type="entry name" value="PRK13516.1"/>
    <property type="match status" value="1"/>
</dbReference>
<dbReference type="PANTHER" id="PTHR36510">
    <property type="entry name" value="GLUTAMATE--CYSTEINE LIGASE 2-RELATED"/>
    <property type="match status" value="1"/>
</dbReference>
<dbReference type="PANTHER" id="PTHR36510:SF1">
    <property type="entry name" value="GLUTAMATE--CYSTEINE LIGASE 2-RELATED"/>
    <property type="match status" value="1"/>
</dbReference>
<dbReference type="Pfam" id="PF04107">
    <property type="entry name" value="GCS2"/>
    <property type="match status" value="1"/>
</dbReference>
<dbReference type="SUPFAM" id="SSF55931">
    <property type="entry name" value="Glutamine synthetase/guanido kinase"/>
    <property type="match status" value="1"/>
</dbReference>
<accession>B1K1H9</accession>
<name>GCS2_BURO0</name>
<feature type="chain" id="PRO_1000148207" description="Putative glutamate--cysteine ligase 2">
    <location>
        <begin position="1"/>
        <end position="371"/>
    </location>
</feature>
<gene>
    <name type="ordered locus">Bcenmc03_0087</name>
</gene>
<reference key="1">
    <citation type="submission" date="2008-02" db="EMBL/GenBank/DDBJ databases">
        <title>Complete sequence of chromosome 1 of Burkholderia cenocepacia MC0-3.</title>
        <authorList>
            <person name="Copeland A."/>
            <person name="Lucas S."/>
            <person name="Lapidus A."/>
            <person name="Barry K."/>
            <person name="Bruce D."/>
            <person name="Goodwin L."/>
            <person name="Glavina del Rio T."/>
            <person name="Dalin E."/>
            <person name="Tice H."/>
            <person name="Pitluck S."/>
            <person name="Chain P."/>
            <person name="Malfatti S."/>
            <person name="Shin M."/>
            <person name="Vergez L."/>
            <person name="Schmutz J."/>
            <person name="Larimer F."/>
            <person name="Land M."/>
            <person name="Hauser L."/>
            <person name="Kyrpides N."/>
            <person name="Mikhailova N."/>
            <person name="Tiedje J."/>
            <person name="Richardson P."/>
        </authorList>
    </citation>
    <scope>NUCLEOTIDE SEQUENCE [LARGE SCALE GENOMIC DNA]</scope>
    <source>
        <strain>MC0-3</strain>
    </source>
</reference>
<evidence type="ECO:0000255" key="1">
    <source>
        <dbReference type="HAMAP-Rule" id="MF_01609"/>
    </source>
</evidence>
<comment type="function">
    <text evidence="1">ATP-dependent carboxylate-amine ligase which exhibits weak glutamate--cysteine ligase activity.</text>
</comment>
<comment type="catalytic activity">
    <reaction evidence="1">
        <text>L-cysteine + L-glutamate + ATP = gamma-L-glutamyl-L-cysteine + ADP + phosphate + H(+)</text>
        <dbReference type="Rhea" id="RHEA:13285"/>
        <dbReference type="ChEBI" id="CHEBI:15378"/>
        <dbReference type="ChEBI" id="CHEBI:29985"/>
        <dbReference type="ChEBI" id="CHEBI:30616"/>
        <dbReference type="ChEBI" id="CHEBI:35235"/>
        <dbReference type="ChEBI" id="CHEBI:43474"/>
        <dbReference type="ChEBI" id="CHEBI:58173"/>
        <dbReference type="ChEBI" id="CHEBI:456216"/>
        <dbReference type="EC" id="6.3.2.2"/>
    </reaction>
</comment>
<comment type="similarity">
    <text evidence="1">Belongs to the glutamate--cysteine ligase type 2 family. YbdK subfamily.</text>
</comment>
<organism>
    <name type="scientific">Burkholderia orbicola (strain MC0-3)</name>
    <dbReference type="NCBI Taxonomy" id="406425"/>
    <lineage>
        <taxon>Bacteria</taxon>
        <taxon>Pseudomonadati</taxon>
        <taxon>Pseudomonadota</taxon>
        <taxon>Betaproteobacteria</taxon>
        <taxon>Burkholderiales</taxon>
        <taxon>Burkholderiaceae</taxon>
        <taxon>Burkholderia</taxon>
        <taxon>Burkholderia cepacia complex</taxon>
        <taxon>Burkholderia orbicola</taxon>
    </lineage>
</organism>
<sequence>MALETFVNSEPFTFGVELEIQVVNTHNYDLTKAASDLMRLIQGETFPGNITPEITESMIELSTGICHSHEQAVSELHAIRDVLVKAADQLNVGLAGGGTHAFQQWSDRQIYDAPRFQYISELYGYLAKQFTVFGQHVHIGCPDPDSALFLLHSMSRFIPHFIALSASSPFVQNVDTGFHSARLNSVFAFPLSGRAPFVLTWDSFEEYFTKMVNTGVVNSMKDFYWDIRPKPGYGTIEVRVMDTPLSVDRAAAIACYIQTLARYLLTDRPLKLSEDDYLVYTFNRFEACRFGLEGTCVNPQTGERRTIAEDILDTLDRIAPHAAALGSRAALDEIGALAKARVNDASWLRTVFKQEKSLNETVRQQCLRWRE</sequence>
<protein>
    <recommendedName>
        <fullName evidence="1">Putative glutamate--cysteine ligase 2</fullName>
        <ecNumber evidence="1">6.3.2.2</ecNumber>
    </recommendedName>
    <alternativeName>
        <fullName evidence="1">Gamma-glutamylcysteine synthetase 2</fullName>
        <shortName evidence="1">GCS 2</shortName>
        <shortName evidence="1">Gamma-GCS 2</shortName>
    </alternativeName>
</protein>